<feature type="chain" id="PRO_0000131276" description="Large ribosomal subunit protein uL18">
    <location>
        <begin position="1"/>
        <end position="117"/>
    </location>
</feature>
<reference key="1">
    <citation type="journal article" date="2004" name="Proc. Natl. Acad. Sci. U.S.A.">
        <title>Genome sequence of the deep-sea gamma-proteobacterium Idiomarina loihiensis reveals amino acid fermentation as a source of carbon and energy.</title>
        <authorList>
            <person name="Hou S."/>
            <person name="Saw J.H."/>
            <person name="Lee K.S."/>
            <person name="Freitas T.A."/>
            <person name="Belisle C."/>
            <person name="Kawarabayasi Y."/>
            <person name="Donachie S.P."/>
            <person name="Pikina A."/>
            <person name="Galperin M.Y."/>
            <person name="Koonin E.V."/>
            <person name="Makarova K.S."/>
            <person name="Omelchenko M.V."/>
            <person name="Sorokin A."/>
            <person name="Wolf Y.I."/>
            <person name="Li Q.X."/>
            <person name="Keum Y.S."/>
            <person name="Campbell S."/>
            <person name="Denery J."/>
            <person name="Aizawa S."/>
            <person name="Shibata S."/>
            <person name="Malahoff A."/>
            <person name="Alam M."/>
        </authorList>
    </citation>
    <scope>NUCLEOTIDE SEQUENCE [LARGE SCALE GENOMIC DNA]</scope>
    <source>
        <strain>ATCC BAA-735 / DSM 15497 / L2-TR</strain>
    </source>
</reference>
<organism>
    <name type="scientific">Idiomarina loihiensis (strain ATCC BAA-735 / DSM 15497 / L2-TR)</name>
    <dbReference type="NCBI Taxonomy" id="283942"/>
    <lineage>
        <taxon>Bacteria</taxon>
        <taxon>Pseudomonadati</taxon>
        <taxon>Pseudomonadota</taxon>
        <taxon>Gammaproteobacteria</taxon>
        <taxon>Alteromonadales</taxon>
        <taxon>Idiomarinaceae</taxon>
        <taxon>Idiomarina</taxon>
    </lineage>
</organism>
<gene>
    <name evidence="1" type="primary">rplR</name>
    <name type="ordered locus">IL1900</name>
</gene>
<keyword id="KW-1185">Reference proteome</keyword>
<keyword id="KW-0687">Ribonucleoprotein</keyword>
<keyword id="KW-0689">Ribosomal protein</keyword>
<keyword id="KW-0694">RNA-binding</keyword>
<keyword id="KW-0699">rRNA-binding</keyword>
<proteinExistence type="inferred from homology"/>
<protein>
    <recommendedName>
        <fullName evidence="1">Large ribosomal subunit protein uL18</fullName>
    </recommendedName>
    <alternativeName>
        <fullName evidence="2">50S ribosomal protein L18</fullName>
    </alternativeName>
</protein>
<evidence type="ECO:0000255" key="1">
    <source>
        <dbReference type="HAMAP-Rule" id="MF_01337"/>
    </source>
</evidence>
<evidence type="ECO:0000305" key="2"/>
<accession>Q5QXW1</accession>
<name>RL18_IDILO</name>
<sequence>MDNKAARLRRATRARKQIKELGANRLVVHRTPRHIYAQLIAPNGSEVLAAASTAEKSVREGLKSTGNVDAAKVVGKTIAERAIEKGVKNVSFDRSGFKYHGRVAALADAAREAGLQF</sequence>
<comment type="function">
    <text evidence="1">This is one of the proteins that bind and probably mediate the attachment of the 5S RNA into the large ribosomal subunit, where it forms part of the central protuberance.</text>
</comment>
<comment type="subunit">
    <text evidence="1">Part of the 50S ribosomal subunit; part of the 5S rRNA/L5/L18/L25 subcomplex. Contacts the 5S and 23S rRNAs.</text>
</comment>
<comment type="similarity">
    <text evidence="1">Belongs to the universal ribosomal protein uL18 family.</text>
</comment>
<dbReference type="EMBL" id="AE017340">
    <property type="protein sequence ID" value="AAV82732.1"/>
    <property type="molecule type" value="Genomic_DNA"/>
</dbReference>
<dbReference type="RefSeq" id="WP_011235131.1">
    <property type="nucleotide sequence ID" value="NC_006512.1"/>
</dbReference>
<dbReference type="SMR" id="Q5QXW1"/>
<dbReference type="STRING" id="283942.IL1900"/>
<dbReference type="GeneID" id="41337088"/>
<dbReference type="KEGG" id="ilo:IL1900"/>
<dbReference type="eggNOG" id="COG0256">
    <property type="taxonomic scope" value="Bacteria"/>
</dbReference>
<dbReference type="HOGENOM" id="CLU_098841_0_1_6"/>
<dbReference type="OrthoDB" id="9810939at2"/>
<dbReference type="Proteomes" id="UP000001171">
    <property type="component" value="Chromosome"/>
</dbReference>
<dbReference type="GO" id="GO:0022625">
    <property type="term" value="C:cytosolic large ribosomal subunit"/>
    <property type="evidence" value="ECO:0007669"/>
    <property type="project" value="TreeGrafter"/>
</dbReference>
<dbReference type="GO" id="GO:0008097">
    <property type="term" value="F:5S rRNA binding"/>
    <property type="evidence" value="ECO:0007669"/>
    <property type="project" value="TreeGrafter"/>
</dbReference>
<dbReference type="GO" id="GO:0003735">
    <property type="term" value="F:structural constituent of ribosome"/>
    <property type="evidence" value="ECO:0007669"/>
    <property type="project" value="InterPro"/>
</dbReference>
<dbReference type="GO" id="GO:0006412">
    <property type="term" value="P:translation"/>
    <property type="evidence" value="ECO:0007669"/>
    <property type="project" value="UniProtKB-UniRule"/>
</dbReference>
<dbReference type="CDD" id="cd00432">
    <property type="entry name" value="Ribosomal_L18_L5e"/>
    <property type="match status" value="1"/>
</dbReference>
<dbReference type="FunFam" id="3.30.420.100:FF:000001">
    <property type="entry name" value="50S ribosomal protein L18"/>
    <property type="match status" value="1"/>
</dbReference>
<dbReference type="Gene3D" id="3.30.420.100">
    <property type="match status" value="1"/>
</dbReference>
<dbReference type="HAMAP" id="MF_01337_B">
    <property type="entry name" value="Ribosomal_uL18_B"/>
    <property type="match status" value="1"/>
</dbReference>
<dbReference type="InterPro" id="IPR004389">
    <property type="entry name" value="Ribosomal_uL18_bac-type"/>
</dbReference>
<dbReference type="InterPro" id="IPR005484">
    <property type="entry name" value="Ribosomal_uL18_bac/euk"/>
</dbReference>
<dbReference type="NCBIfam" id="TIGR00060">
    <property type="entry name" value="L18_bact"/>
    <property type="match status" value="1"/>
</dbReference>
<dbReference type="PANTHER" id="PTHR12899">
    <property type="entry name" value="39S RIBOSOMAL PROTEIN L18, MITOCHONDRIAL"/>
    <property type="match status" value="1"/>
</dbReference>
<dbReference type="PANTHER" id="PTHR12899:SF3">
    <property type="entry name" value="LARGE RIBOSOMAL SUBUNIT PROTEIN UL18M"/>
    <property type="match status" value="1"/>
</dbReference>
<dbReference type="Pfam" id="PF00861">
    <property type="entry name" value="Ribosomal_L18p"/>
    <property type="match status" value="1"/>
</dbReference>
<dbReference type="SUPFAM" id="SSF53137">
    <property type="entry name" value="Translational machinery components"/>
    <property type="match status" value="1"/>
</dbReference>